<gene>
    <name evidence="8" type="primary">LPMO9A</name>
    <name type="ORF">SCHCODRAFT_54466</name>
</gene>
<organism>
    <name type="scientific">Schizophyllum commune (strain H4-8 / FGSC 9210)</name>
    <name type="common">Split gill fungus</name>
    <dbReference type="NCBI Taxonomy" id="578458"/>
    <lineage>
        <taxon>Eukaryota</taxon>
        <taxon>Fungi</taxon>
        <taxon>Dikarya</taxon>
        <taxon>Basidiomycota</taxon>
        <taxon>Agaricomycotina</taxon>
        <taxon>Agaricomycetes</taxon>
        <taxon>Agaricomycetidae</taxon>
        <taxon>Agaricales</taxon>
        <taxon>Schizophyllaceae</taxon>
        <taxon>Schizophyllum</taxon>
    </lineage>
</organism>
<reference key="1">
    <citation type="journal article" date="2010" name="Nat. Biotechnol.">
        <title>Genome sequence of the model mushroom Schizophyllum commune.</title>
        <authorList>
            <person name="Ohm R.A."/>
            <person name="de Jong J.F."/>
            <person name="Lugones L.G."/>
            <person name="Aerts A."/>
            <person name="Kothe E."/>
            <person name="Stajich J.E."/>
            <person name="de Vries R.P."/>
            <person name="Record E."/>
            <person name="Levasseur A."/>
            <person name="Baker S.E."/>
            <person name="Bartholomew K.A."/>
            <person name="Coutinho P.M."/>
            <person name="Erdmann S."/>
            <person name="Fowler T.J."/>
            <person name="Gathman A.C."/>
            <person name="Lombard V."/>
            <person name="Henrissat B."/>
            <person name="Knabe N."/>
            <person name="Kuees U."/>
            <person name="Lilly W.W."/>
            <person name="Lindquist E."/>
            <person name="Lucas S."/>
            <person name="Magnuson J.K."/>
            <person name="Piumi F."/>
            <person name="Raudaskoski M."/>
            <person name="Salamov A."/>
            <person name="Schmutz J."/>
            <person name="Schwarze F.W.M.R."/>
            <person name="vanKuyk P.A."/>
            <person name="Horton J.S."/>
            <person name="Grigoriev I.V."/>
            <person name="Woesten H.A.B."/>
        </authorList>
    </citation>
    <scope>NUCLEOTIDE SEQUENCE [LARGE SCALE GENOMIC DNA]</scope>
    <source>
        <strain>H4-8 / FGSC 9210</strain>
    </source>
</reference>
<reference key="2">
    <citation type="journal article" date="2023" name="Sci. Rep.">
        <title>Functional characterization of a lytic polysaccharide monooxygenase from Schizophyllum commune that degrades non-crystalline substrates.</title>
        <authorList>
            <person name="Oestby H."/>
            <person name="Christensen I.A."/>
            <person name="Hennum K."/>
            <person name="Varnai A."/>
            <person name="Buchinger E."/>
            <person name="Grandal S."/>
            <person name="Courtade G."/>
            <person name="Hegnar O.A."/>
            <person name="Aachmann F.L."/>
            <person name="Eijsink V.G.H."/>
        </authorList>
    </citation>
    <scope>FUNCTION</scope>
    <scope>CATALYTIC ACTIVITY</scope>
    <scope>SUBSTRATE SPECIFICITY</scope>
    <scope>BIOTECHNOLOGY</scope>
</reference>
<sequence>MVRLASLAVLGSVIATASAHTRVWGVYVNGEYQGDGIGQYVRSPPTNNPVKDLTSAAMKCNVNDAREFEVPKRVSVAGGDELSFEWYHDYRNDDIIASSHHGPIQVYMSGDDGATWTKIASDGYDTGSSTWAVDRLISAGGKHSVIIPDVPAGDYLLRAEIVALHEADVAYDQNPIRGAQNYPSCTQITVTSNGSDALPADGVKFPGAYTDSTPGIIFNIWPPNAQDPATYQVPGPAVWDKAPGGSV</sequence>
<protein>
    <recommendedName>
        <fullName evidence="8">AA9 family lytic polysaccharide monooxygenase A</fullName>
        <shortName evidence="8">LPMO9A</shortName>
        <ecNumber evidence="7">1.14.99.56</ecNumber>
    </recommendedName>
    <alternativeName>
        <fullName evidence="9">Cellulase LPMO9A</fullName>
    </alternativeName>
    <alternativeName>
        <fullName evidence="9">Endo-beta-1,4-glucanase LPMO9A</fullName>
        <shortName evidence="9">Endoglucanase LPMO9A</shortName>
    </alternativeName>
    <alternativeName>
        <fullName evidence="9">Glycosyl hydrolase 61 family protein LPMO9A</fullName>
    </alternativeName>
</protein>
<feature type="signal peptide" evidence="5">
    <location>
        <begin position="1"/>
        <end position="19"/>
    </location>
</feature>
<feature type="chain" id="PRO_5003120483" description="AA9 family lytic polysaccharide monooxygenase A">
    <location>
        <begin position="20"/>
        <end position="247"/>
    </location>
</feature>
<feature type="binding site" evidence="1">
    <location>
        <position position="20"/>
    </location>
    <ligand>
        <name>Cu(2+)</name>
        <dbReference type="ChEBI" id="CHEBI:29036"/>
        <note>catalytic</note>
    </ligand>
</feature>
<feature type="binding site" evidence="1">
    <location>
        <position position="100"/>
    </location>
    <ligand>
        <name>Cu(2+)</name>
        <dbReference type="ChEBI" id="CHEBI:29036"/>
        <note>catalytic</note>
    </ligand>
</feature>
<feature type="binding site" evidence="2">
    <location>
        <position position="165"/>
    </location>
    <ligand>
        <name>O2</name>
        <dbReference type="ChEBI" id="CHEBI:15379"/>
    </ligand>
</feature>
<feature type="binding site" evidence="1">
    <location>
        <position position="182"/>
    </location>
    <ligand>
        <name>Cu(2+)</name>
        <dbReference type="ChEBI" id="CHEBI:29036"/>
        <note>catalytic</note>
    </ligand>
</feature>
<feature type="glycosylation site" description="N-linked (GlcNAc...) asparagine" evidence="6">
    <location>
        <position position="193"/>
    </location>
</feature>
<feature type="disulfide bond" evidence="4">
    <location>
        <begin position="60"/>
        <end position="185"/>
    </location>
</feature>
<comment type="function">
    <text evidence="7">Lytic polysaccharide monooxygenase (LPMO) that depolymerizes polysaccharides via the oxidation of scissile alpha- or beta-(1-4)-glycosidic bonds, yielding C4 oxidation products (PubMed:37833388). Catalysis by LPMOs requires the reduction of the active-site copper from Cu(II) to Cu(I) by a reducing agent and H(2)O(2) or O(2) as a cosubstrate (PubMed:37833388). Shows C4-oxidative cleavage of amorphous cellulose and soluble cello-oligosaccharides (PubMed:37833388). Also active on xyloglucan, mixed-linkage beta-glucan, and glucomannan (PubMed:37833388). Not active on crystalline forms of cellulose (PubMed:37833388). Has higher affinity for linear substrates compared to branched substrates (PubMed:37833388). Catalyzes a fast and specific peroxygenase reaction that is at least two orders of magnitude faster than the apparent monooxygenase reaction (PubMed:37833388).</text>
</comment>
<comment type="catalytic activity">
    <reaction evidence="7">
        <text>[(1-&gt;4)-beta-D-glucosyl]n+m + reduced acceptor + O2 = 4-dehydro-beta-D-glucosyl-[(1-&gt;4)-beta-D-glucosyl]n-1 + [(1-&gt;4)-beta-D-glucosyl]m + acceptor + H2O.</text>
        <dbReference type="EC" id="1.14.99.56"/>
    </reaction>
</comment>
<comment type="cofactor">
    <cofactor evidence="3">
        <name>Cu(2+)</name>
        <dbReference type="ChEBI" id="CHEBI:29036"/>
    </cofactor>
    <text evidence="3">Binds 1 copper ion per subunit.</text>
</comment>
<comment type="subcellular location">
    <subcellularLocation>
        <location evidence="10">Secreted</location>
    </subcellularLocation>
</comment>
<comment type="biotechnology">
    <text evidence="7">Lignocellulose is the most abundant polymeric composite on Earth and is a recalcitrant but promising renewable substrate for industrial biotechnology applications. Together with cellobiose dehydrogenases (CDHs) an enzymatic system capable of oxidative cellulose cleavage is formed, which increases the efficiency of cellulases and put LPMOs at focus of biofuel research.</text>
</comment>
<comment type="similarity">
    <text evidence="9">Belongs to the polysaccharide monooxygenase AA9 family.</text>
</comment>
<keyword id="KW-0119">Carbohydrate metabolism</keyword>
<keyword id="KW-0136">Cellulose degradation</keyword>
<keyword id="KW-0186">Copper</keyword>
<keyword id="KW-1015">Disulfide bond</keyword>
<keyword id="KW-0325">Glycoprotein</keyword>
<keyword id="KW-0479">Metal-binding</keyword>
<keyword id="KW-0503">Monooxygenase</keyword>
<keyword id="KW-0560">Oxidoreductase</keyword>
<keyword id="KW-0624">Polysaccharide degradation</keyword>
<keyword id="KW-1185">Reference proteome</keyword>
<keyword id="KW-0964">Secreted</keyword>
<keyword id="KW-0732">Signal</keyword>
<accession>D8Q364</accession>
<proteinExistence type="evidence at protein level"/>
<dbReference type="EC" id="1.14.99.56" evidence="7"/>
<dbReference type="EMBL" id="GL377305">
    <property type="protein sequence ID" value="EFI98254.1"/>
    <property type="molecule type" value="Genomic_DNA"/>
</dbReference>
<dbReference type="RefSeq" id="XP_003033157.1">
    <property type="nucleotide sequence ID" value="XM_003033111.1"/>
</dbReference>
<dbReference type="SMR" id="D8Q364"/>
<dbReference type="STRING" id="578458.D8Q364"/>
<dbReference type="VEuPathDB" id="FungiDB:SCHCODRAFT_01280218"/>
<dbReference type="eggNOG" id="ENOG502RXMI">
    <property type="taxonomic scope" value="Eukaryota"/>
</dbReference>
<dbReference type="HOGENOM" id="CLU_031730_0_0_1"/>
<dbReference type="InParanoid" id="D8Q364"/>
<dbReference type="OMA" id="YHNTRDD"/>
<dbReference type="Proteomes" id="UP000007431">
    <property type="component" value="Unassembled WGS sequence"/>
</dbReference>
<dbReference type="GO" id="GO:0005576">
    <property type="term" value="C:extracellular region"/>
    <property type="evidence" value="ECO:0007669"/>
    <property type="project" value="UniProtKB-SubCell"/>
</dbReference>
<dbReference type="GO" id="GO:0046872">
    <property type="term" value="F:metal ion binding"/>
    <property type="evidence" value="ECO:0007669"/>
    <property type="project" value="UniProtKB-KW"/>
</dbReference>
<dbReference type="GO" id="GO:0004497">
    <property type="term" value="F:monooxygenase activity"/>
    <property type="evidence" value="ECO:0007669"/>
    <property type="project" value="UniProtKB-KW"/>
</dbReference>
<dbReference type="GO" id="GO:0030245">
    <property type="term" value="P:cellulose catabolic process"/>
    <property type="evidence" value="ECO:0007669"/>
    <property type="project" value="UniProtKB-KW"/>
</dbReference>
<dbReference type="CDD" id="cd21175">
    <property type="entry name" value="LPMO_AA9"/>
    <property type="match status" value="1"/>
</dbReference>
<dbReference type="Gene3D" id="2.70.50.70">
    <property type="match status" value="1"/>
</dbReference>
<dbReference type="InterPro" id="IPR049892">
    <property type="entry name" value="AA9"/>
</dbReference>
<dbReference type="InterPro" id="IPR005103">
    <property type="entry name" value="AA9_LPMO"/>
</dbReference>
<dbReference type="PANTHER" id="PTHR33353:SF17">
    <property type="entry name" value="ENDO-BETA-1,4-GLUCANASE D"/>
    <property type="match status" value="1"/>
</dbReference>
<dbReference type="PANTHER" id="PTHR33353">
    <property type="entry name" value="PUTATIVE (AFU_ORTHOLOGUE AFUA_1G12560)-RELATED"/>
    <property type="match status" value="1"/>
</dbReference>
<dbReference type="Pfam" id="PF03443">
    <property type="entry name" value="AA9"/>
    <property type="match status" value="1"/>
</dbReference>
<name>LP9A_SCHCM</name>
<evidence type="ECO:0000250" key="1">
    <source>
        <dbReference type="UniProtKB" id="A0A223GEC9"/>
    </source>
</evidence>
<evidence type="ECO:0000250" key="2">
    <source>
        <dbReference type="UniProtKB" id="Q1K8B6"/>
    </source>
</evidence>
<evidence type="ECO:0000250" key="3">
    <source>
        <dbReference type="UniProtKB" id="Q4WP32"/>
    </source>
</evidence>
<evidence type="ECO:0000250" key="4">
    <source>
        <dbReference type="UniProtKB" id="Q7SA19"/>
    </source>
</evidence>
<evidence type="ECO:0000255" key="5"/>
<evidence type="ECO:0000255" key="6">
    <source>
        <dbReference type="PROSITE-ProRule" id="PRU00498"/>
    </source>
</evidence>
<evidence type="ECO:0000269" key="7">
    <source>
    </source>
</evidence>
<evidence type="ECO:0000303" key="8">
    <source>
    </source>
</evidence>
<evidence type="ECO:0000305" key="9"/>
<evidence type="ECO:0000305" key="10">
    <source>
    </source>
</evidence>